<comment type="similarity">
    <text evidence="1">Belongs to the bacterial ribosomal protein bL35 family.</text>
</comment>
<keyword id="KW-0687">Ribonucleoprotein</keyword>
<keyword id="KW-0689">Ribosomal protein</keyword>
<feature type="chain" id="PRO_1000127417" description="Large ribosomal subunit protein bL35">
    <location>
        <begin position="1"/>
        <end position="68"/>
    </location>
</feature>
<feature type="region of interest" description="Disordered" evidence="2">
    <location>
        <begin position="29"/>
        <end position="68"/>
    </location>
</feature>
<feature type="compositionally biased region" description="Basic residues" evidence="2">
    <location>
        <begin position="35"/>
        <end position="47"/>
    </location>
</feature>
<name>RL35_SULSY</name>
<proteinExistence type="inferred from homology"/>
<protein>
    <recommendedName>
        <fullName evidence="1">Large ribosomal subunit protein bL35</fullName>
    </recommendedName>
    <alternativeName>
        <fullName evidence="3">50S ribosomal protein L35</fullName>
    </alternativeName>
</protein>
<evidence type="ECO:0000255" key="1">
    <source>
        <dbReference type="HAMAP-Rule" id="MF_00514"/>
    </source>
</evidence>
<evidence type="ECO:0000256" key="2">
    <source>
        <dbReference type="SAM" id="MobiDB-lite"/>
    </source>
</evidence>
<evidence type="ECO:0000305" key="3"/>
<reference key="1">
    <citation type="journal article" date="2009" name="J. Bacteriol.">
        <title>Complete and draft genome sequences of six members of the Aquificales.</title>
        <authorList>
            <person name="Reysenbach A.-L."/>
            <person name="Hamamura N."/>
            <person name="Podar M."/>
            <person name="Griffiths E."/>
            <person name="Ferreira S."/>
            <person name="Hochstein R."/>
            <person name="Heidelberg J."/>
            <person name="Johnson J."/>
            <person name="Mead D."/>
            <person name="Pohorille A."/>
            <person name="Sarmiento M."/>
            <person name="Schweighofer K."/>
            <person name="Seshadri R."/>
            <person name="Voytek M.A."/>
        </authorList>
    </citation>
    <scope>NUCLEOTIDE SEQUENCE [LARGE SCALE GENOMIC DNA]</scope>
    <source>
        <strain>YO3AOP1</strain>
    </source>
</reference>
<organism>
    <name type="scientific">Sulfurihydrogenibium sp. (strain YO3AOP1)</name>
    <dbReference type="NCBI Taxonomy" id="436114"/>
    <lineage>
        <taxon>Bacteria</taxon>
        <taxon>Pseudomonadati</taxon>
        <taxon>Aquificota</taxon>
        <taxon>Aquificia</taxon>
        <taxon>Aquificales</taxon>
        <taxon>Hydrogenothermaceae</taxon>
        <taxon>Sulfurihydrogenibium</taxon>
    </lineage>
</organism>
<accession>B2V6V2</accession>
<sequence>MAKVKMKTNRTAAKRLKITATGKVKYTKGGVSHYNTKKSSKRKRQGRKPQYVPKNLEHKVKALLPNDV</sequence>
<dbReference type="EMBL" id="CP001080">
    <property type="protein sequence ID" value="ACD67284.1"/>
    <property type="molecule type" value="Genomic_DNA"/>
</dbReference>
<dbReference type="RefSeq" id="WP_012460340.1">
    <property type="nucleotide sequence ID" value="NC_010730.1"/>
</dbReference>
<dbReference type="SMR" id="B2V6V2"/>
<dbReference type="STRING" id="436114.SYO3AOP1_1686"/>
<dbReference type="KEGG" id="sul:SYO3AOP1_1686"/>
<dbReference type="eggNOG" id="COG0291">
    <property type="taxonomic scope" value="Bacteria"/>
</dbReference>
<dbReference type="HOGENOM" id="CLU_169643_4_3_0"/>
<dbReference type="GO" id="GO:0022625">
    <property type="term" value="C:cytosolic large ribosomal subunit"/>
    <property type="evidence" value="ECO:0007669"/>
    <property type="project" value="TreeGrafter"/>
</dbReference>
<dbReference type="GO" id="GO:0003735">
    <property type="term" value="F:structural constituent of ribosome"/>
    <property type="evidence" value="ECO:0007669"/>
    <property type="project" value="InterPro"/>
</dbReference>
<dbReference type="GO" id="GO:0006412">
    <property type="term" value="P:translation"/>
    <property type="evidence" value="ECO:0007669"/>
    <property type="project" value="UniProtKB-UniRule"/>
</dbReference>
<dbReference type="FunFam" id="4.10.410.60:FF:000001">
    <property type="entry name" value="50S ribosomal protein L35"/>
    <property type="match status" value="1"/>
</dbReference>
<dbReference type="Gene3D" id="4.10.410.60">
    <property type="match status" value="1"/>
</dbReference>
<dbReference type="HAMAP" id="MF_00514">
    <property type="entry name" value="Ribosomal_bL35"/>
    <property type="match status" value="1"/>
</dbReference>
<dbReference type="InterPro" id="IPR001706">
    <property type="entry name" value="Ribosomal_bL35"/>
</dbReference>
<dbReference type="InterPro" id="IPR021137">
    <property type="entry name" value="Ribosomal_bL35-like"/>
</dbReference>
<dbReference type="InterPro" id="IPR037229">
    <property type="entry name" value="Ribosomal_bL35_sf"/>
</dbReference>
<dbReference type="NCBIfam" id="TIGR00001">
    <property type="entry name" value="rpmI_bact"/>
    <property type="match status" value="1"/>
</dbReference>
<dbReference type="PANTHER" id="PTHR33343">
    <property type="entry name" value="54S RIBOSOMAL PROTEIN BL35M"/>
    <property type="match status" value="1"/>
</dbReference>
<dbReference type="PANTHER" id="PTHR33343:SF1">
    <property type="entry name" value="LARGE RIBOSOMAL SUBUNIT PROTEIN BL35M"/>
    <property type="match status" value="1"/>
</dbReference>
<dbReference type="Pfam" id="PF01632">
    <property type="entry name" value="Ribosomal_L35p"/>
    <property type="match status" value="1"/>
</dbReference>
<dbReference type="PRINTS" id="PR00064">
    <property type="entry name" value="RIBOSOMALL35"/>
</dbReference>
<dbReference type="SUPFAM" id="SSF143034">
    <property type="entry name" value="L35p-like"/>
    <property type="match status" value="1"/>
</dbReference>
<gene>
    <name evidence="1" type="primary">rpmI</name>
    <name type="ordered locus">SYO3AOP1_1686</name>
</gene>